<proteinExistence type="inferred from homology"/>
<dbReference type="EC" id="3.6.5.n1" evidence="1"/>
<dbReference type="EMBL" id="CP000802">
    <property type="protein sequence ID" value="ABV06983.1"/>
    <property type="molecule type" value="Genomic_DNA"/>
</dbReference>
<dbReference type="RefSeq" id="WP_000790168.1">
    <property type="nucleotide sequence ID" value="NC_009800.1"/>
</dbReference>
<dbReference type="SMR" id="A8A379"/>
<dbReference type="GeneID" id="93774522"/>
<dbReference type="KEGG" id="ecx:EcHS_A2724"/>
<dbReference type="HOGENOM" id="CLU_009995_3_3_6"/>
<dbReference type="GO" id="GO:0005886">
    <property type="term" value="C:plasma membrane"/>
    <property type="evidence" value="ECO:0007669"/>
    <property type="project" value="UniProtKB-SubCell"/>
</dbReference>
<dbReference type="GO" id="GO:0005525">
    <property type="term" value="F:GTP binding"/>
    <property type="evidence" value="ECO:0007669"/>
    <property type="project" value="UniProtKB-UniRule"/>
</dbReference>
<dbReference type="GO" id="GO:0003924">
    <property type="term" value="F:GTPase activity"/>
    <property type="evidence" value="ECO:0007669"/>
    <property type="project" value="UniProtKB-UniRule"/>
</dbReference>
<dbReference type="GO" id="GO:0097216">
    <property type="term" value="F:guanosine tetraphosphate binding"/>
    <property type="evidence" value="ECO:0007669"/>
    <property type="project" value="UniProtKB-ARBA"/>
</dbReference>
<dbReference type="GO" id="GO:0043022">
    <property type="term" value="F:ribosome binding"/>
    <property type="evidence" value="ECO:0007669"/>
    <property type="project" value="UniProtKB-UniRule"/>
</dbReference>
<dbReference type="GO" id="GO:0003746">
    <property type="term" value="F:translation elongation factor activity"/>
    <property type="evidence" value="ECO:0007669"/>
    <property type="project" value="UniProtKB-UniRule"/>
</dbReference>
<dbReference type="GO" id="GO:0045727">
    <property type="term" value="P:positive regulation of translation"/>
    <property type="evidence" value="ECO:0007669"/>
    <property type="project" value="UniProtKB-UniRule"/>
</dbReference>
<dbReference type="CDD" id="cd03699">
    <property type="entry name" value="EF4_II"/>
    <property type="match status" value="1"/>
</dbReference>
<dbReference type="CDD" id="cd16260">
    <property type="entry name" value="EF4_III"/>
    <property type="match status" value="1"/>
</dbReference>
<dbReference type="CDD" id="cd01890">
    <property type="entry name" value="LepA"/>
    <property type="match status" value="1"/>
</dbReference>
<dbReference type="CDD" id="cd03709">
    <property type="entry name" value="lepA_C"/>
    <property type="match status" value="1"/>
</dbReference>
<dbReference type="FunFam" id="3.30.70.240:FF:000005">
    <property type="entry name" value="Elongation factor 4"/>
    <property type="match status" value="1"/>
</dbReference>
<dbReference type="FunFam" id="3.40.50.300:FF:000078">
    <property type="entry name" value="Elongation factor 4"/>
    <property type="match status" value="1"/>
</dbReference>
<dbReference type="FunFam" id="2.40.30.10:FF:000015">
    <property type="entry name" value="Translation factor GUF1, mitochondrial"/>
    <property type="match status" value="1"/>
</dbReference>
<dbReference type="FunFam" id="3.30.70.2570:FF:000001">
    <property type="entry name" value="Translation factor GUF1, mitochondrial"/>
    <property type="match status" value="1"/>
</dbReference>
<dbReference type="FunFam" id="3.30.70.870:FF:000004">
    <property type="entry name" value="Translation factor GUF1, mitochondrial"/>
    <property type="match status" value="1"/>
</dbReference>
<dbReference type="Gene3D" id="3.30.70.240">
    <property type="match status" value="1"/>
</dbReference>
<dbReference type="Gene3D" id="3.30.70.2570">
    <property type="entry name" value="Elongation factor 4, C-terminal domain"/>
    <property type="match status" value="1"/>
</dbReference>
<dbReference type="Gene3D" id="3.30.70.870">
    <property type="entry name" value="Elongation Factor G (Translational Gtpase), domain 3"/>
    <property type="match status" value="1"/>
</dbReference>
<dbReference type="Gene3D" id="3.40.50.300">
    <property type="entry name" value="P-loop containing nucleotide triphosphate hydrolases"/>
    <property type="match status" value="1"/>
</dbReference>
<dbReference type="Gene3D" id="2.40.30.10">
    <property type="entry name" value="Translation factors"/>
    <property type="match status" value="1"/>
</dbReference>
<dbReference type="HAMAP" id="MF_00071">
    <property type="entry name" value="LepA"/>
    <property type="match status" value="1"/>
</dbReference>
<dbReference type="InterPro" id="IPR006297">
    <property type="entry name" value="EF-4"/>
</dbReference>
<dbReference type="InterPro" id="IPR035647">
    <property type="entry name" value="EFG_III/V"/>
</dbReference>
<dbReference type="InterPro" id="IPR000640">
    <property type="entry name" value="EFG_V-like"/>
</dbReference>
<dbReference type="InterPro" id="IPR004161">
    <property type="entry name" value="EFTu-like_2"/>
</dbReference>
<dbReference type="InterPro" id="IPR031157">
    <property type="entry name" value="G_TR_CS"/>
</dbReference>
<dbReference type="InterPro" id="IPR038363">
    <property type="entry name" value="LepA_C_sf"/>
</dbReference>
<dbReference type="InterPro" id="IPR013842">
    <property type="entry name" value="LepA_CTD"/>
</dbReference>
<dbReference type="InterPro" id="IPR035654">
    <property type="entry name" value="LepA_IV"/>
</dbReference>
<dbReference type="InterPro" id="IPR027417">
    <property type="entry name" value="P-loop_NTPase"/>
</dbReference>
<dbReference type="InterPro" id="IPR005225">
    <property type="entry name" value="Small_GTP-bd"/>
</dbReference>
<dbReference type="InterPro" id="IPR000795">
    <property type="entry name" value="T_Tr_GTP-bd_dom"/>
</dbReference>
<dbReference type="NCBIfam" id="TIGR01393">
    <property type="entry name" value="lepA"/>
    <property type="match status" value="1"/>
</dbReference>
<dbReference type="NCBIfam" id="TIGR00231">
    <property type="entry name" value="small_GTP"/>
    <property type="match status" value="1"/>
</dbReference>
<dbReference type="PANTHER" id="PTHR43512:SF4">
    <property type="entry name" value="TRANSLATION FACTOR GUF1 HOMOLOG, CHLOROPLASTIC"/>
    <property type="match status" value="1"/>
</dbReference>
<dbReference type="PANTHER" id="PTHR43512">
    <property type="entry name" value="TRANSLATION FACTOR GUF1-RELATED"/>
    <property type="match status" value="1"/>
</dbReference>
<dbReference type="Pfam" id="PF00679">
    <property type="entry name" value="EFG_C"/>
    <property type="match status" value="1"/>
</dbReference>
<dbReference type="Pfam" id="PF00009">
    <property type="entry name" value="GTP_EFTU"/>
    <property type="match status" value="1"/>
</dbReference>
<dbReference type="Pfam" id="PF03144">
    <property type="entry name" value="GTP_EFTU_D2"/>
    <property type="match status" value="1"/>
</dbReference>
<dbReference type="Pfam" id="PF06421">
    <property type="entry name" value="LepA_C"/>
    <property type="match status" value="1"/>
</dbReference>
<dbReference type="PRINTS" id="PR00315">
    <property type="entry name" value="ELONGATNFCT"/>
</dbReference>
<dbReference type="SUPFAM" id="SSF54980">
    <property type="entry name" value="EF-G C-terminal domain-like"/>
    <property type="match status" value="2"/>
</dbReference>
<dbReference type="SUPFAM" id="SSF52540">
    <property type="entry name" value="P-loop containing nucleoside triphosphate hydrolases"/>
    <property type="match status" value="1"/>
</dbReference>
<dbReference type="PROSITE" id="PS00301">
    <property type="entry name" value="G_TR_1"/>
    <property type="match status" value="1"/>
</dbReference>
<dbReference type="PROSITE" id="PS51722">
    <property type="entry name" value="G_TR_2"/>
    <property type="match status" value="1"/>
</dbReference>
<name>LEPA_ECOHS</name>
<feature type="chain" id="PRO_1000057473" description="Elongation factor 4">
    <location>
        <begin position="1"/>
        <end position="599"/>
    </location>
</feature>
<feature type="domain" description="tr-type G">
    <location>
        <begin position="2"/>
        <end position="184"/>
    </location>
</feature>
<feature type="binding site" evidence="1">
    <location>
        <begin position="14"/>
        <end position="19"/>
    </location>
    <ligand>
        <name>GTP</name>
        <dbReference type="ChEBI" id="CHEBI:37565"/>
    </ligand>
</feature>
<feature type="binding site" evidence="1">
    <location>
        <begin position="131"/>
        <end position="134"/>
    </location>
    <ligand>
        <name>GTP</name>
        <dbReference type="ChEBI" id="CHEBI:37565"/>
    </ligand>
</feature>
<gene>
    <name evidence="1" type="primary">lepA</name>
    <name type="ordered locus">EcHS_A2724</name>
</gene>
<organism>
    <name type="scientific">Escherichia coli O9:H4 (strain HS)</name>
    <dbReference type="NCBI Taxonomy" id="331112"/>
    <lineage>
        <taxon>Bacteria</taxon>
        <taxon>Pseudomonadati</taxon>
        <taxon>Pseudomonadota</taxon>
        <taxon>Gammaproteobacteria</taxon>
        <taxon>Enterobacterales</taxon>
        <taxon>Enterobacteriaceae</taxon>
        <taxon>Escherichia</taxon>
    </lineage>
</organism>
<reference key="1">
    <citation type="journal article" date="2008" name="J. Bacteriol.">
        <title>The pangenome structure of Escherichia coli: comparative genomic analysis of E. coli commensal and pathogenic isolates.</title>
        <authorList>
            <person name="Rasko D.A."/>
            <person name="Rosovitz M.J."/>
            <person name="Myers G.S.A."/>
            <person name="Mongodin E.F."/>
            <person name="Fricke W.F."/>
            <person name="Gajer P."/>
            <person name="Crabtree J."/>
            <person name="Sebaihia M."/>
            <person name="Thomson N.R."/>
            <person name="Chaudhuri R."/>
            <person name="Henderson I.R."/>
            <person name="Sperandio V."/>
            <person name="Ravel J."/>
        </authorList>
    </citation>
    <scope>NUCLEOTIDE SEQUENCE [LARGE SCALE GENOMIC DNA]</scope>
    <source>
        <strain>HS</strain>
    </source>
</reference>
<protein>
    <recommendedName>
        <fullName evidence="1">Elongation factor 4</fullName>
        <shortName evidence="1">EF-4</shortName>
        <ecNumber evidence="1">3.6.5.n1</ecNumber>
    </recommendedName>
    <alternativeName>
        <fullName evidence="1">Ribosomal back-translocase LepA</fullName>
    </alternativeName>
</protein>
<sequence>MKNIRNFSIIAHIDHGKSTLSDRIIQICGGLSDREMEAQVLDSMDLERERGITIKAQSVTLDYKASDGETYQLNFIDTPGHVDFSYEVSRSLAACEGALLVVDAGQGVEAQTLANCYTAMEMDLEVVPVLNKIDLPAADPERVAEEIEDIVGIDATDAVRCSAKTGVGVQDVLERLVRDIPPPEGDPEGPLQALIIDSWFDNYLGVVSLIRIKNGTLRKGDKVKVMSTGQTYNADRLGIFTPKQVDRTELKCGEVGWLVCAIKDIHGAPVGDTLTLARNPAEKALPGFKKVKPQVYAGLFPVSSDDYEAFRDALGKLSLNDASLFYEPESSSALGFGFRCGFLGLLHMEIIQERLEREYDLDLITTAPTVVYEVETTSREVIYVDSPSKLPAVNNIYELREPIAECHMLLPQAYLGNVITLCVEKRGVQTNMVYHGNQVALTYEIPMAEVVLDFFDRLKSTSRGYASLDYNFKRFQASDMVRVDVLINGERVDALALITHRDNSQNRGRELVEKMKDLIPRQQFDIAIQAAIGTHIIARSTVKQLRKNVLAKCYGGDISRKKKLLQKQKEGKKRMKQIGNVELPQEAFLAILHVGKDNK</sequence>
<evidence type="ECO:0000255" key="1">
    <source>
        <dbReference type="HAMAP-Rule" id="MF_00071"/>
    </source>
</evidence>
<keyword id="KW-0997">Cell inner membrane</keyword>
<keyword id="KW-1003">Cell membrane</keyword>
<keyword id="KW-0342">GTP-binding</keyword>
<keyword id="KW-0378">Hydrolase</keyword>
<keyword id="KW-0472">Membrane</keyword>
<keyword id="KW-0547">Nucleotide-binding</keyword>
<keyword id="KW-0648">Protein biosynthesis</keyword>
<comment type="function">
    <text evidence="1">Required for accurate and efficient protein synthesis under certain stress conditions. May act as a fidelity factor of the translation reaction, by catalyzing a one-codon backward translocation of tRNAs on improperly translocated ribosomes. Back-translocation proceeds from a post-translocation (POST) complex to a pre-translocation (PRE) complex, thus giving elongation factor G a second chance to translocate the tRNAs correctly. Binds to ribosomes in a GTP-dependent manner.</text>
</comment>
<comment type="catalytic activity">
    <reaction evidence="1">
        <text>GTP + H2O = GDP + phosphate + H(+)</text>
        <dbReference type="Rhea" id="RHEA:19669"/>
        <dbReference type="ChEBI" id="CHEBI:15377"/>
        <dbReference type="ChEBI" id="CHEBI:15378"/>
        <dbReference type="ChEBI" id="CHEBI:37565"/>
        <dbReference type="ChEBI" id="CHEBI:43474"/>
        <dbReference type="ChEBI" id="CHEBI:58189"/>
        <dbReference type="EC" id="3.6.5.n1"/>
    </reaction>
</comment>
<comment type="subcellular location">
    <subcellularLocation>
        <location evidence="1">Cell inner membrane</location>
        <topology evidence="1">Peripheral membrane protein</topology>
        <orientation evidence="1">Cytoplasmic side</orientation>
    </subcellularLocation>
</comment>
<comment type="similarity">
    <text evidence="1">Belongs to the TRAFAC class translation factor GTPase superfamily. Classic translation factor GTPase family. LepA subfamily.</text>
</comment>
<accession>A8A379</accession>